<reference key="1">
    <citation type="journal article" date="1998" name="J. Gen. Virol.">
        <title>Nucleotide sequence of the 3'-terminal two-thirds of the grapevine leafroll-associated virus-3 genome reveals a typical monopartite closterovirus.</title>
        <authorList>
            <person name="Ling K.S."/>
            <person name="Zhu H.Y."/>
            <person name="Drong R.F."/>
            <person name="Slightom J.L."/>
            <person name="McFerson J.R."/>
            <person name="Gonsalves D."/>
        </authorList>
    </citation>
    <scope>NUCLEOTIDE SEQUENCE [GENOMIC RNA]</scope>
</reference>
<accession>O71189</accession>
<gene>
    <name type="ORF">1a-1b</name>
</gene>
<keyword id="KW-0067">ATP-binding</keyword>
<keyword id="KW-0223">Dioxygenase</keyword>
<keyword id="KW-0347">Helicase</keyword>
<keyword id="KW-0378">Hydrolase</keyword>
<keyword id="KW-0408">Iron</keyword>
<keyword id="KW-0479">Metal-binding</keyword>
<keyword id="KW-0489">Methyltransferase</keyword>
<keyword id="KW-0547">Nucleotide-binding</keyword>
<keyword id="KW-0548">Nucleotidyltransferase</keyword>
<keyword id="KW-0560">Oxidoreductase</keyword>
<keyword id="KW-0645">Protease</keyword>
<keyword id="KW-1185">Reference proteome</keyword>
<keyword id="KW-0688">Ribosomal frameshifting</keyword>
<keyword id="KW-0696">RNA-directed RNA polymerase</keyword>
<keyword id="KW-0788">Thiol protease</keyword>
<keyword id="KW-0808">Transferase</keyword>
<keyword id="KW-0693">Viral RNA replication</keyword>
<organism>
    <name type="scientific">Grapevine leafroll-associated virus 3 (isolate United States/NY1)</name>
    <name type="common">GLRaV-3</name>
    <name type="synonym">Grapevine leafroll-associated closterovirus (isolate 109)</name>
    <dbReference type="NCBI Taxonomy" id="651354"/>
    <lineage>
        <taxon>Viruses</taxon>
        <taxon>Riboviria</taxon>
        <taxon>Orthornavirae</taxon>
        <taxon>Kitrinoviricota</taxon>
        <taxon>Alsuviricetes</taxon>
        <taxon>Martellivirales</taxon>
        <taxon>Closteroviridae</taxon>
        <taxon>Ampelovirus</taxon>
        <taxon>Grapevine leafroll-associated virus 3</taxon>
    </lineage>
</organism>
<name>R1AB_GLRV3</name>
<sequence>MDYIRPLRVFSFPHVNNTLEYVRYNKANGDVGAFLTTMKFIGNVKLSDFTPRCAAMIYIGKLTKGVKRTFVPPPVKGFARQYAVVSGSVSALRGDGKKVLMEARTSTSATSDVSDFDVVFEAVSNALLVVHYHRVVPYAPVKREQPKPAVKQDEQKPKRQASHWAVKPTAVGVHVPLPKKQEALEPAQSVPQQSLEEKAALTFGLFFSKGGGDESDAVILRKGKLFNRALNVPIDVKNTFVWAKIWDEASRRRGYFYVKDRAVKFFPIVRGRATIEDFIVNTAPGCDVALPRIELWSMRERAFVCTTKGWCWFNNERLRGEIYRRRCFSSSFSIGFLMHLGFRSLKVIRFAGTNILHMPSLNEERTFGWKGGDVYLPNVPKTAIVAGDRTRLGGEILASVANALNQEEVYSSVVSSITNRLVLRDQSALLSHLDTKLCDMFSQRDAMIREKPSHRCDVFLKPREREKLRELFPELSIQFSDSVRSSHPFANAMRSCFNGIFSRRCGNVCFFDIGGSFTYHVKAGHVNCHVCNPVLDVKDVKRRINEILFLSTAGGDSYVSSDLLTEAASKSVSYCSRESQNCDSRADAGFMVDVYDISPQQVAEAMDKKGALVFDIALMFPVELLYGNGEVYLEELDTLVKREGDYLAYNVGQCGEMYEHSFSNVSGFFTFSYVRTSSGNVFKLEYEGYRCGYHHLTMCRAQKSPGTEVTYRSLVPSFVGKSLVFIPVVAGSSVSFKTIVLDSDFVDRIYSYALNTIGTFENRTFEYAVGAVRSQKTHVITGSRVVHSKVDISPDDMWGLVVAVMAQAIKDRAKSIRSYNFIKASEGSLAGVFKLFFQTVGDCFSNAVSVYAKAMVHDNFNVLETLMSMPRAFIRKVPGSVVVTICTSGASDRLELRGAFDISKETFGRKLKNSRLRVFSRAIVEDSIKVMKAMKTEDGKPLPITEDSVYAFIMGNVSNVHCTRAGLLGGSKATVVSSVSKGLVARGAATKAFSGITSFFSTGSLFYDRGLTEDERLDALVRTENAINSPVGILETSRVAVSKVVAGTKEFWSEVSLNDFTTFVLRNKVLIGIFVASLGAAPIAWKYRRGIAANARRYAGSSYETLSSLSSQAAGGLRGLTSSTVSGGSLVVRRGFSSAVTVTRATVAKRQVPLALLSFSTSYAISGCSMLGIWAHALPRHLMFFFGLGTLLGARASANTWKFGGFSNNWCAVPEVVWRGKSVSSLLLPITLGVSLIIRGLLNDTIPQLAYVPPVEGRNVYDETLRYYRDFDYDEGAGPSGTQHEAVPGDDNDGSTSSVSSYDVVTNVRDVGISTNGEVTGEEETHSPRSVQYTYVEEEVAPSAAVAERQGDPSGSGTADAMAFVESVKKGVDDVFHQQSSGETAREVEVDGKGLLPESVVGEAPTQERGRAADGNTAQTAVNEGDREPVQSSLVSSPQADIPKVTQSEVHAQKEVKQEVPLATVSGATPIVDEKPAPSVTTRGVKIIDKGKAVAHVAEKKQVQVEQPKQRSLTINEGKAGKQLCMFRTCSCGVQLDVYNEATIATRFSNAFTFVDNLKGRSAVFFSKLGEGYTYNGGSHVSSGWPRALEDILTAIKYPSVFDHCLVQKYKMGGGVPFHADDEECYPSDNPILTVNLVGKANFSTKCRKGGKVMVINVASGDYFLMPCGFQRTHLHSVNSIDEGRISLTFRATRRVFGVGRMLQLAGGVSDEKSPGVPNQQPQSQGATRTITPKSGGKALSEGSGREVKGRSTYSIWCEQDYVRKCEWLRADNPVMALEPDYTPMTFEVVKTGTSEDAVVEYLKYLAIGIERTYRALLMARNIAVTTAEGVLKVPNQVYESLPGFHVYKSGTDLIFHSTQDGLRVRDLPYVLIAEKGIFTKGKDVDAVVALGDNLFVCDDILVFHDAINLIGALKVARCGMVGESFKSFEYKCYNAPPGGGKTTTLVDEFVKSPNSTATITANVGSSEDINMAVKKRDPNLEGLNSATTVNSRVVNFIVRGMYKRVLVDEVHMMHQGLLQLGVFATGASEGLFFGDINQIPFINREKVFRMDCAVFVPKKESVVYTSKSYRCPLDVCYLLSSMTVRGTEKCYPEKVVSGKDKPVVRSLSKRPIGTTDDVAEINADVYLCMTQLEKSDMKRSLKGKGKETPVMTVHEAQGKTFSDVVLFRTKKADDSLFTKQPHILVGLSRHTRSLVYAALSSKLDDKVGTYISDASPQSVSDALLTRSPRLVAFEVYERMNFGPTFEGELVRKIPTSHFVAVNGFLEDLLDGCPAFDYDFFEDDFETSDQSFLIEDVRISESFSHFTSKIEDRFYSFIRSSVGLPKRNTLKCNLVTFENRNFNADRGCNVGCDDSVAHELKEIFFEEVVNKARLAEVTESHLSSNTMLLSDWLDKRAPNAYKSLKRALGSFVFHPSMLTSYTLMVKADVKPKLDNTPLSKYVTGQNIVYHDRCVTALFSCIFTACVERLKYVVDERWLFYHGMDTAELAAALRNNLGDIRQYYTYELDISKYDKSQSALMKQVEELILLTLGVDREVLSTFFCGEYDSVVRTMTKELVLSVGSQRRSGGANTWLGNSLVLCTLLSVVLRGLDYSYIVVSGDDSLIFSRQPLDIDTSVLSDNFGFDVKIFNQAAPYFCSKFLVQVEDSLFFVPDPLKLFVKFGASKTSDIDLLHEIFQSFVDLSKGFNREDVIQELAKLVTRKYKHSGWTYSALCVLHVLSANFSQFCRLYYHNSVNLDVRPIQRTESLSLLALKARILRWKASRFAFSIKRG</sequence>
<protein>
    <recommendedName>
        <fullName>Replicase polyprotein 1ab</fullName>
    </recommendedName>
    <component>
        <recommendedName>
            <fullName>Leader protease</fullName>
            <shortName>L-Pro</shortName>
            <ecNumber>3.4.22.-</ecNumber>
        </recommendedName>
        <alternativeName>
            <fullName>Papain-like cysteine proteinase</fullName>
            <shortName>PCP</shortName>
        </alternativeName>
    </component>
    <component>
        <recommendedName>
            <fullName>Methyltransferase/helicase/RNA-directed RNA polymerase</fullName>
            <ecNumber>2.1.1.-</ecNumber>
            <ecNumber>2.7.7.48</ecNumber>
            <ecNumber>3.6.4.13</ecNumber>
        </recommendedName>
    </component>
</protein>
<organismHost>
    <name type="scientific">Vitis vinifera</name>
    <name type="common">Grape</name>
    <dbReference type="NCBI Taxonomy" id="29760"/>
</organismHost>
<evidence type="ECO:0000250" key="1"/>
<evidence type="ECO:0000255" key="2">
    <source>
        <dbReference type="PROSITE-ProRule" id="PRU00539"/>
    </source>
</evidence>
<evidence type="ECO:0000255" key="3">
    <source>
        <dbReference type="PROSITE-ProRule" id="PRU00805"/>
    </source>
</evidence>
<evidence type="ECO:0000255" key="4">
    <source>
        <dbReference type="PROSITE-ProRule" id="PRU01079"/>
    </source>
</evidence>
<evidence type="ECO:0000256" key="5">
    <source>
        <dbReference type="SAM" id="MobiDB-lite"/>
    </source>
</evidence>
<evidence type="ECO:0000305" key="6"/>
<comment type="function">
    <text evidence="6">RNA-dependent RNA polymerase replicates the viral genome.</text>
</comment>
<comment type="catalytic activity">
    <reaction evidence="2">
        <text>RNA(n) + a ribonucleoside 5'-triphosphate = RNA(n+1) + diphosphate</text>
        <dbReference type="Rhea" id="RHEA:21248"/>
        <dbReference type="Rhea" id="RHEA-COMP:14527"/>
        <dbReference type="Rhea" id="RHEA-COMP:17342"/>
        <dbReference type="ChEBI" id="CHEBI:33019"/>
        <dbReference type="ChEBI" id="CHEBI:61557"/>
        <dbReference type="ChEBI" id="CHEBI:140395"/>
        <dbReference type="EC" id="2.7.7.48"/>
    </reaction>
</comment>
<comment type="catalytic activity">
    <reaction>
        <text>ATP + H2O = ADP + phosphate + H(+)</text>
        <dbReference type="Rhea" id="RHEA:13065"/>
        <dbReference type="ChEBI" id="CHEBI:15377"/>
        <dbReference type="ChEBI" id="CHEBI:15378"/>
        <dbReference type="ChEBI" id="CHEBI:30616"/>
        <dbReference type="ChEBI" id="CHEBI:43474"/>
        <dbReference type="ChEBI" id="CHEBI:456216"/>
        <dbReference type="EC" id="3.6.4.13"/>
    </reaction>
</comment>
<comment type="cofactor">
    <cofactor evidence="3">
        <name>Fe(2+)</name>
        <dbReference type="ChEBI" id="CHEBI:29033"/>
    </cofactor>
    <text evidence="3">Binds 1 Fe(2+) ion per subunit.</text>
</comment>
<comment type="alternative products">
    <event type="ribosomal frameshifting"/>
    <isoform>
        <id>O71189-1</id>
        <name>Replicase 1ab</name>
        <sequence type="displayed"/>
    </isoform>
    <isoform>
        <id>O71188-1</id>
        <name>Replicase 1a</name>
        <sequence type="external"/>
    </isoform>
    <text>The replicase 1a is produced from conventional translation of the 1a ORF. The replicase 1ab is generated probably by a +1 ribosomal frameshifting mechanism occurring at the 1a-1b genes boundary.</text>
</comment>
<comment type="domain">
    <text evidence="1">The C-terminal domain is required for autoproteolysis.</text>
</comment>
<comment type="similarity">
    <text evidence="6">Belongs to the ssRNA positive-strand viruses RNA-directed RNA polymerase family.</text>
</comment>
<comment type="sequence caution" evidence="6">
    <conflict type="erroneous gene model prediction">
        <sequence resource="EMBL-CDS" id="AAC40705"/>
    </conflict>
</comment>
<dbReference type="EC" id="3.4.22.-"/>
<dbReference type="EC" id="2.1.1.-"/>
<dbReference type="EC" id="2.7.7.48"/>
<dbReference type="EC" id="3.6.4.13"/>
<dbReference type="EMBL" id="AF037268">
    <property type="protein sequence ID" value="AAC40705.3"/>
    <property type="status" value="ALT_SEQ"/>
    <property type="molecule type" value="Genomic_RNA"/>
</dbReference>
<dbReference type="SMR" id="O71189"/>
<dbReference type="Proteomes" id="UP000006707">
    <property type="component" value="Segment"/>
</dbReference>
<dbReference type="GO" id="GO:0005524">
    <property type="term" value="F:ATP binding"/>
    <property type="evidence" value="ECO:0007669"/>
    <property type="project" value="UniProtKB-KW"/>
</dbReference>
<dbReference type="GO" id="GO:0016887">
    <property type="term" value="F:ATP hydrolysis activity"/>
    <property type="evidence" value="ECO:0007669"/>
    <property type="project" value="RHEA"/>
</dbReference>
<dbReference type="GO" id="GO:0008234">
    <property type="term" value="F:cysteine-type peptidase activity"/>
    <property type="evidence" value="ECO:0007669"/>
    <property type="project" value="UniProtKB-KW"/>
</dbReference>
<dbReference type="GO" id="GO:0051213">
    <property type="term" value="F:dioxygenase activity"/>
    <property type="evidence" value="ECO:0007669"/>
    <property type="project" value="UniProtKB-KW"/>
</dbReference>
<dbReference type="GO" id="GO:0046872">
    <property type="term" value="F:metal ion binding"/>
    <property type="evidence" value="ECO:0007669"/>
    <property type="project" value="UniProtKB-KW"/>
</dbReference>
<dbReference type="GO" id="GO:0008174">
    <property type="term" value="F:mRNA methyltransferase activity"/>
    <property type="evidence" value="ECO:0007669"/>
    <property type="project" value="InterPro"/>
</dbReference>
<dbReference type="GO" id="GO:0003723">
    <property type="term" value="F:RNA binding"/>
    <property type="evidence" value="ECO:0007669"/>
    <property type="project" value="InterPro"/>
</dbReference>
<dbReference type="GO" id="GO:0003724">
    <property type="term" value="F:RNA helicase activity"/>
    <property type="evidence" value="ECO:0007669"/>
    <property type="project" value="UniProtKB-EC"/>
</dbReference>
<dbReference type="GO" id="GO:0003968">
    <property type="term" value="F:RNA-directed RNA polymerase activity"/>
    <property type="evidence" value="ECO:0007669"/>
    <property type="project" value="UniProtKB-KW"/>
</dbReference>
<dbReference type="GO" id="GO:0006351">
    <property type="term" value="P:DNA-templated transcription"/>
    <property type="evidence" value="ECO:0007669"/>
    <property type="project" value="InterPro"/>
</dbReference>
<dbReference type="GO" id="GO:0032259">
    <property type="term" value="P:methylation"/>
    <property type="evidence" value="ECO:0007669"/>
    <property type="project" value="UniProtKB-KW"/>
</dbReference>
<dbReference type="GO" id="GO:0016556">
    <property type="term" value="P:mRNA modification"/>
    <property type="evidence" value="ECO:0007669"/>
    <property type="project" value="InterPro"/>
</dbReference>
<dbReference type="GO" id="GO:0006508">
    <property type="term" value="P:proteolysis"/>
    <property type="evidence" value="ECO:0007669"/>
    <property type="project" value="UniProtKB-KW"/>
</dbReference>
<dbReference type="GO" id="GO:0006396">
    <property type="term" value="P:RNA processing"/>
    <property type="evidence" value="ECO:0007669"/>
    <property type="project" value="InterPro"/>
</dbReference>
<dbReference type="GO" id="GO:0039694">
    <property type="term" value="P:viral RNA genome replication"/>
    <property type="evidence" value="ECO:0007669"/>
    <property type="project" value="InterPro"/>
</dbReference>
<dbReference type="GO" id="GO:0075523">
    <property type="term" value="P:viral translational frameshifting"/>
    <property type="evidence" value="ECO:0007669"/>
    <property type="project" value="UniProtKB-KW"/>
</dbReference>
<dbReference type="CDD" id="cd23253">
    <property type="entry name" value="Closteroviridae_RdRp"/>
    <property type="match status" value="1"/>
</dbReference>
<dbReference type="Gene3D" id="2.60.120.590">
    <property type="entry name" value="Alpha-ketoglutarate-dependent dioxygenase AlkB-like"/>
    <property type="match status" value="1"/>
</dbReference>
<dbReference type="Gene3D" id="3.40.50.300">
    <property type="entry name" value="P-loop containing nucleotide triphosphate hydrolases"/>
    <property type="match status" value="2"/>
</dbReference>
<dbReference type="InterPro" id="IPR027351">
    <property type="entry name" value="(+)RNA_virus_helicase_core_dom"/>
</dbReference>
<dbReference type="InterPro" id="IPR037151">
    <property type="entry name" value="AlkB-like_sf"/>
</dbReference>
<dbReference type="InterPro" id="IPR002588">
    <property type="entry name" value="Alphavirus-like_MT_dom"/>
</dbReference>
<dbReference type="InterPro" id="IPR047308">
    <property type="entry name" value="Closteroviridae_RdRp"/>
</dbReference>
<dbReference type="InterPro" id="IPR043502">
    <property type="entry name" value="DNA/RNA_pol_sf"/>
</dbReference>
<dbReference type="InterPro" id="IPR044861">
    <property type="entry name" value="IPNS-like_FE2OG_OXY"/>
</dbReference>
<dbReference type="InterPro" id="IPR005123">
    <property type="entry name" value="Oxoglu/Fe-dep_dioxygenase_dom"/>
</dbReference>
<dbReference type="InterPro" id="IPR027417">
    <property type="entry name" value="P-loop_NTPase"/>
</dbReference>
<dbReference type="InterPro" id="IPR001788">
    <property type="entry name" value="RNA-dep_RNA_pol_alsuvir"/>
</dbReference>
<dbReference type="InterPro" id="IPR007094">
    <property type="entry name" value="RNA-dir_pol_PSvirus"/>
</dbReference>
<dbReference type="Pfam" id="PF03171">
    <property type="entry name" value="2OG-FeII_Oxy"/>
    <property type="match status" value="1"/>
</dbReference>
<dbReference type="Pfam" id="PF00978">
    <property type="entry name" value="RdRP_2"/>
    <property type="match status" value="1"/>
</dbReference>
<dbReference type="Pfam" id="PF01443">
    <property type="entry name" value="Viral_helicase1"/>
    <property type="match status" value="1"/>
</dbReference>
<dbReference type="Pfam" id="PF01660">
    <property type="entry name" value="Vmethyltransf"/>
    <property type="match status" value="1"/>
</dbReference>
<dbReference type="SUPFAM" id="SSF51197">
    <property type="entry name" value="Clavaminate synthase-like"/>
    <property type="match status" value="1"/>
</dbReference>
<dbReference type="SUPFAM" id="SSF56672">
    <property type="entry name" value="DNA/RNA polymerases"/>
    <property type="match status" value="1"/>
</dbReference>
<dbReference type="SUPFAM" id="SSF52540">
    <property type="entry name" value="P-loop containing nucleoside triphosphate hydrolases"/>
    <property type="match status" value="2"/>
</dbReference>
<dbReference type="PROSITE" id="PS51743">
    <property type="entry name" value="ALPHAVIRUS_MT"/>
    <property type="match status" value="1"/>
</dbReference>
<dbReference type="PROSITE" id="PS51471">
    <property type="entry name" value="FE2OG_OXY"/>
    <property type="match status" value="1"/>
</dbReference>
<dbReference type="PROSITE" id="PS51657">
    <property type="entry name" value="PSRV_HELICASE"/>
    <property type="match status" value="1"/>
</dbReference>
<dbReference type="PROSITE" id="PS50507">
    <property type="entry name" value="RDRP_SSRNA_POS"/>
    <property type="match status" value="1"/>
</dbReference>
<proteinExistence type="inferred from homology"/>
<feature type="chain" id="PRO_0000402528" description="Replicase polyprotein 1ab">
    <location>
        <begin position="1"/>
        <end position="2772"/>
    </location>
</feature>
<feature type="chain" id="PRO_0000402529" description="Leader protease" evidence="1">
    <location>
        <begin position="1"/>
        <end position="393"/>
    </location>
</feature>
<feature type="chain" id="PRO_0000402530" description="Methyltransferase/helicase/RNA-directed RNA polymerase" evidence="1">
    <location>
        <begin position="394"/>
        <end position="2772"/>
    </location>
</feature>
<feature type="domain" description="Alphavirus-like MT" evidence="4">
    <location>
        <begin position="478"/>
        <end position="669"/>
    </location>
</feature>
<feature type="domain" description="Fe2OG dioxygenase" evidence="3">
    <location>
        <begin position="1601"/>
        <end position="1694"/>
    </location>
</feature>
<feature type="domain" description="(+)RNA virus helicase ATP-binding">
    <location>
        <begin position="1902"/>
        <end position="2066"/>
    </location>
</feature>
<feature type="domain" description="(+)RNA virus helicase C-terminal">
    <location>
        <begin position="2067"/>
        <end position="2233"/>
    </location>
</feature>
<feature type="domain" description="RdRp catalytic" evidence="2">
    <location>
        <begin position="2502"/>
        <end position="2615"/>
    </location>
</feature>
<feature type="region of interest" description="Disordered" evidence="5">
    <location>
        <begin position="143"/>
        <end position="163"/>
    </location>
</feature>
<feature type="region of interest" description="Disordered" evidence="5">
    <location>
        <begin position="1277"/>
        <end position="1301"/>
    </location>
</feature>
<feature type="region of interest" description="Disordered" evidence="5">
    <location>
        <begin position="1400"/>
        <end position="1442"/>
    </location>
</feature>
<feature type="region of interest" description="Disordered" evidence="5">
    <location>
        <begin position="1708"/>
        <end position="1746"/>
    </location>
</feature>
<feature type="compositionally biased region" description="Basic and acidic residues" evidence="5">
    <location>
        <begin position="143"/>
        <end position="157"/>
    </location>
</feature>
<feature type="compositionally biased region" description="Polar residues" evidence="5">
    <location>
        <begin position="1430"/>
        <end position="1442"/>
    </location>
</feature>
<feature type="compositionally biased region" description="Polar residues" evidence="5">
    <location>
        <begin position="1717"/>
        <end position="1733"/>
    </location>
</feature>
<feature type="active site" description="For leader protease activity" evidence="1">
    <location>
        <position position="311"/>
    </location>
</feature>
<feature type="active site" description="For leader protease activity" evidence="1">
    <location>
        <position position="357"/>
    </location>
</feature>
<feature type="binding site" evidence="3">
    <location>
        <position position="1619"/>
    </location>
    <ligand>
        <name>Fe cation</name>
        <dbReference type="ChEBI" id="CHEBI:24875"/>
    </ligand>
</feature>
<feature type="binding site" evidence="3">
    <location>
        <position position="1621"/>
    </location>
    <ligand>
        <name>Fe cation</name>
        <dbReference type="ChEBI" id="CHEBI:24875"/>
    </ligand>
</feature>
<feature type="binding site" evidence="3">
    <location>
        <position position="1676"/>
    </location>
    <ligand>
        <name>Fe cation</name>
        <dbReference type="ChEBI" id="CHEBI:24875"/>
    </ligand>
</feature>
<feature type="binding site" evidence="3">
    <location>
        <position position="1685"/>
    </location>
    <ligand>
        <name>2-oxoglutarate</name>
        <dbReference type="ChEBI" id="CHEBI:16810"/>
    </ligand>
</feature>
<feature type="site" description="Cleavage; by the leader protease" evidence="1">
    <location>
        <begin position="393"/>
        <end position="394"/>
    </location>
</feature>